<gene>
    <name evidence="1" type="primary">aspS</name>
    <name type="ordered locus">Dred_0757</name>
</gene>
<dbReference type="EC" id="6.1.1.23" evidence="1"/>
<dbReference type="EMBL" id="CP000612">
    <property type="protein sequence ID" value="ABO49295.1"/>
    <property type="molecule type" value="Genomic_DNA"/>
</dbReference>
<dbReference type="RefSeq" id="WP_011877131.1">
    <property type="nucleotide sequence ID" value="NC_009253.1"/>
</dbReference>
<dbReference type="SMR" id="A4J2J2"/>
<dbReference type="STRING" id="349161.Dred_0757"/>
<dbReference type="KEGG" id="drm:Dred_0757"/>
<dbReference type="eggNOG" id="COG0173">
    <property type="taxonomic scope" value="Bacteria"/>
</dbReference>
<dbReference type="HOGENOM" id="CLU_014330_3_2_9"/>
<dbReference type="OrthoDB" id="9802326at2"/>
<dbReference type="Proteomes" id="UP000001556">
    <property type="component" value="Chromosome"/>
</dbReference>
<dbReference type="GO" id="GO:0005737">
    <property type="term" value="C:cytoplasm"/>
    <property type="evidence" value="ECO:0007669"/>
    <property type="project" value="UniProtKB-SubCell"/>
</dbReference>
<dbReference type="GO" id="GO:0004815">
    <property type="term" value="F:aspartate-tRNA ligase activity"/>
    <property type="evidence" value="ECO:0007669"/>
    <property type="project" value="UniProtKB-UniRule"/>
</dbReference>
<dbReference type="GO" id="GO:0050560">
    <property type="term" value="F:aspartate-tRNA(Asn) ligase activity"/>
    <property type="evidence" value="ECO:0007669"/>
    <property type="project" value="UniProtKB-EC"/>
</dbReference>
<dbReference type="GO" id="GO:0005524">
    <property type="term" value="F:ATP binding"/>
    <property type="evidence" value="ECO:0007669"/>
    <property type="project" value="UniProtKB-UniRule"/>
</dbReference>
<dbReference type="GO" id="GO:0140096">
    <property type="term" value="F:catalytic activity, acting on a protein"/>
    <property type="evidence" value="ECO:0007669"/>
    <property type="project" value="UniProtKB-ARBA"/>
</dbReference>
<dbReference type="GO" id="GO:0003676">
    <property type="term" value="F:nucleic acid binding"/>
    <property type="evidence" value="ECO:0007669"/>
    <property type="project" value="InterPro"/>
</dbReference>
<dbReference type="GO" id="GO:0016740">
    <property type="term" value="F:transferase activity"/>
    <property type="evidence" value="ECO:0007669"/>
    <property type="project" value="UniProtKB-ARBA"/>
</dbReference>
<dbReference type="GO" id="GO:0006422">
    <property type="term" value="P:aspartyl-tRNA aminoacylation"/>
    <property type="evidence" value="ECO:0007669"/>
    <property type="project" value="UniProtKB-UniRule"/>
</dbReference>
<dbReference type="CDD" id="cd00777">
    <property type="entry name" value="AspRS_core"/>
    <property type="match status" value="1"/>
</dbReference>
<dbReference type="CDD" id="cd04317">
    <property type="entry name" value="EcAspRS_like_N"/>
    <property type="match status" value="1"/>
</dbReference>
<dbReference type="Gene3D" id="3.30.930.10">
    <property type="entry name" value="Bira Bifunctional Protein, Domain 2"/>
    <property type="match status" value="1"/>
</dbReference>
<dbReference type="Gene3D" id="3.30.1360.30">
    <property type="entry name" value="GAD-like domain"/>
    <property type="match status" value="1"/>
</dbReference>
<dbReference type="Gene3D" id="2.40.50.140">
    <property type="entry name" value="Nucleic acid-binding proteins"/>
    <property type="match status" value="1"/>
</dbReference>
<dbReference type="HAMAP" id="MF_00044">
    <property type="entry name" value="Asp_tRNA_synth_type1"/>
    <property type="match status" value="1"/>
</dbReference>
<dbReference type="InterPro" id="IPR004364">
    <property type="entry name" value="Aa-tRNA-synt_II"/>
</dbReference>
<dbReference type="InterPro" id="IPR006195">
    <property type="entry name" value="aa-tRNA-synth_II"/>
</dbReference>
<dbReference type="InterPro" id="IPR045864">
    <property type="entry name" value="aa-tRNA-synth_II/BPL/LPL"/>
</dbReference>
<dbReference type="InterPro" id="IPR004524">
    <property type="entry name" value="Asp-tRNA-ligase_1"/>
</dbReference>
<dbReference type="InterPro" id="IPR047089">
    <property type="entry name" value="Asp-tRNA-ligase_1_N"/>
</dbReference>
<dbReference type="InterPro" id="IPR002312">
    <property type="entry name" value="Asp/Asn-tRNA-synth_IIb"/>
</dbReference>
<dbReference type="InterPro" id="IPR047090">
    <property type="entry name" value="AspRS_core"/>
</dbReference>
<dbReference type="InterPro" id="IPR004115">
    <property type="entry name" value="GAD-like_sf"/>
</dbReference>
<dbReference type="InterPro" id="IPR029351">
    <property type="entry name" value="GAD_dom"/>
</dbReference>
<dbReference type="InterPro" id="IPR012340">
    <property type="entry name" value="NA-bd_OB-fold"/>
</dbReference>
<dbReference type="InterPro" id="IPR004365">
    <property type="entry name" value="NA-bd_OB_tRNA"/>
</dbReference>
<dbReference type="NCBIfam" id="TIGR00459">
    <property type="entry name" value="aspS_bact"/>
    <property type="match status" value="1"/>
</dbReference>
<dbReference type="NCBIfam" id="NF001750">
    <property type="entry name" value="PRK00476.1"/>
    <property type="match status" value="1"/>
</dbReference>
<dbReference type="PANTHER" id="PTHR22594:SF5">
    <property type="entry name" value="ASPARTATE--TRNA LIGASE, MITOCHONDRIAL"/>
    <property type="match status" value="1"/>
</dbReference>
<dbReference type="PANTHER" id="PTHR22594">
    <property type="entry name" value="ASPARTYL/LYSYL-TRNA SYNTHETASE"/>
    <property type="match status" value="1"/>
</dbReference>
<dbReference type="Pfam" id="PF02938">
    <property type="entry name" value="GAD"/>
    <property type="match status" value="1"/>
</dbReference>
<dbReference type="Pfam" id="PF00152">
    <property type="entry name" value="tRNA-synt_2"/>
    <property type="match status" value="1"/>
</dbReference>
<dbReference type="Pfam" id="PF01336">
    <property type="entry name" value="tRNA_anti-codon"/>
    <property type="match status" value="1"/>
</dbReference>
<dbReference type="PRINTS" id="PR01042">
    <property type="entry name" value="TRNASYNTHASP"/>
</dbReference>
<dbReference type="SUPFAM" id="SSF55681">
    <property type="entry name" value="Class II aaRS and biotin synthetases"/>
    <property type="match status" value="1"/>
</dbReference>
<dbReference type="SUPFAM" id="SSF55261">
    <property type="entry name" value="GAD domain-like"/>
    <property type="match status" value="1"/>
</dbReference>
<dbReference type="SUPFAM" id="SSF50249">
    <property type="entry name" value="Nucleic acid-binding proteins"/>
    <property type="match status" value="1"/>
</dbReference>
<dbReference type="PROSITE" id="PS50862">
    <property type="entry name" value="AA_TRNA_LIGASE_II"/>
    <property type="match status" value="1"/>
</dbReference>
<organism>
    <name type="scientific">Desulforamulus reducens (strain ATCC BAA-1160 / DSM 100696 / MI-1)</name>
    <name type="common">Desulfotomaculum reducens</name>
    <dbReference type="NCBI Taxonomy" id="349161"/>
    <lineage>
        <taxon>Bacteria</taxon>
        <taxon>Bacillati</taxon>
        <taxon>Bacillota</taxon>
        <taxon>Clostridia</taxon>
        <taxon>Eubacteriales</taxon>
        <taxon>Peptococcaceae</taxon>
        <taxon>Desulforamulus</taxon>
    </lineage>
</organism>
<protein>
    <recommendedName>
        <fullName evidence="1">Aspartate--tRNA(Asp/Asn) ligase</fullName>
        <ecNumber evidence="1">6.1.1.23</ecNumber>
    </recommendedName>
    <alternativeName>
        <fullName evidence="1">Aspartyl-tRNA synthetase</fullName>
        <shortName evidence="1">AspRS</shortName>
    </alternativeName>
    <alternativeName>
        <fullName evidence="1">Non-discriminating aspartyl-tRNA synthetase</fullName>
        <shortName evidence="1">ND-AspRS</shortName>
    </alternativeName>
</protein>
<accession>A4J2J2</accession>
<comment type="function">
    <text evidence="1">Aspartyl-tRNA synthetase with relaxed tRNA specificity since it is able to aspartylate not only its cognate tRNA(Asp) but also tRNA(Asn). Reaction proceeds in two steps: L-aspartate is first activated by ATP to form Asp-AMP and then transferred to the acceptor end of tRNA(Asp/Asn).</text>
</comment>
<comment type="catalytic activity">
    <reaction evidence="1">
        <text>tRNA(Asx) + L-aspartate + ATP = L-aspartyl-tRNA(Asx) + AMP + diphosphate</text>
        <dbReference type="Rhea" id="RHEA:18349"/>
        <dbReference type="Rhea" id="RHEA-COMP:9710"/>
        <dbReference type="Rhea" id="RHEA-COMP:9711"/>
        <dbReference type="ChEBI" id="CHEBI:29991"/>
        <dbReference type="ChEBI" id="CHEBI:30616"/>
        <dbReference type="ChEBI" id="CHEBI:33019"/>
        <dbReference type="ChEBI" id="CHEBI:78442"/>
        <dbReference type="ChEBI" id="CHEBI:78516"/>
        <dbReference type="ChEBI" id="CHEBI:456215"/>
        <dbReference type="EC" id="6.1.1.23"/>
    </reaction>
</comment>
<comment type="subunit">
    <text evidence="1">Homodimer.</text>
</comment>
<comment type="subcellular location">
    <subcellularLocation>
        <location evidence="1">Cytoplasm</location>
    </subcellularLocation>
</comment>
<comment type="similarity">
    <text evidence="1">Belongs to the class-II aminoacyl-tRNA synthetase family. Type 1 subfamily.</text>
</comment>
<keyword id="KW-0030">Aminoacyl-tRNA synthetase</keyword>
<keyword id="KW-0067">ATP-binding</keyword>
<keyword id="KW-0963">Cytoplasm</keyword>
<keyword id="KW-0436">Ligase</keyword>
<keyword id="KW-0547">Nucleotide-binding</keyword>
<keyword id="KW-0648">Protein biosynthesis</keyword>
<keyword id="KW-1185">Reference proteome</keyword>
<sequence>MSAESMNGLHRTLYCGELHKQHEGQEVTLMGWVQRRRDHGGLIFVDLRDRSGIVQVVFSPEVDQEAFKKAEGVRNEYVLAVVGRVNGRPEGTINPNMATGEVEVYAHTLRLLNRAKTPPFYIEDNIEVDENLRLRYRYLDLRRPEMHKAMMLRHRASKSIRDFLDQHGFLEIETPMLTKSTPEGARDYLVPSRVNPGKFYALPQSPQLFKQILMLAGMERYFQIVRCFRDEDLRADRQPEFTQIDLEMSFVEAEDVMGLMEQMIAEVCSDTIGVKISTPIPRLSYQEAMDRFGSDKPDTRFGLELKDITPIAAQCGFKVFNSTVAGGGQIKGINAKGCASFSRKEIDDLTAFVAVYKAKGLAYFIINEDGSVKSAIAKFFTEEEIAAIKDKMEAQPGDLLLFVADKPAVVAASLGALRVHLAERLELIPQGMWNFLWVTDFPLLEYDSEAGRFFAMHHPFTSPAEEDLPLLESNPGKVRARAYDMVLNGVEIGGGSIRIHRRDIQELMFKALGMSQEEAKEKFGFMLEAFEYGAPPHGGLAFGLDRLVMLLAGKDSIRDVIAFPKTASATCLMTQAPDVVDPAQLAELHIRSTAPVKKSN</sequence>
<evidence type="ECO:0000255" key="1">
    <source>
        <dbReference type="HAMAP-Rule" id="MF_00044"/>
    </source>
</evidence>
<feature type="chain" id="PRO_1000090988" description="Aspartate--tRNA(Asp/Asn) ligase">
    <location>
        <begin position="1"/>
        <end position="600"/>
    </location>
</feature>
<feature type="region of interest" description="Aspartate" evidence="1">
    <location>
        <begin position="207"/>
        <end position="210"/>
    </location>
</feature>
<feature type="binding site" evidence="1">
    <location>
        <position position="183"/>
    </location>
    <ligand>
        <name>L-aspartate</name>
        <dbReference type="ChEBI" id="CHEBI:29991"/>
    </ligand>
</feature>
<feature type="binding site" evidence="1">
    <location>
        <begin position="229"/>
        <end position="231"/>
    </location>
    <ligand>
        <name>ATP</name>
        <dbReference type="ChEBI" id="CHEBI:30616"/>
    </ligand>
</feature>
<feature type="binding site" evidence="1">
    <location>
        <position position="229"/>
    </location>
    <ligand>
        <name>L-aspartate</name>
        <dbReference type="ChEBI" id="CHEBI:29991"/>
    </ligand>
</feature>
<feature type="binding site" evidence="1">
    <location>
        <position position="238"/>
    </location>
    <ligand>
        <name>ATP</name>
        <dbReference type="ChEBI" id="CHEBI:30616"/>
    </ligand>
</feature>
<feature type="binding site" evidence="1">
    <location>
        <position position="457"/>
    </location>
    <ligand>
        <name>L-aspartate</name>
        <dbReference type="ChEBI" id="CHEBI:29991"/>
    </ligand>
</feature>
<feature type="binding site" evidence="1">
    <location>
        <position position="491"/>
    </location>
    <ligand>
        <name>ATP</name>
        <dbReference type="ChEBI" id="CHEBI:30616"/>
    </ligand>
</feature>
<feature type="binding site" evidence="1">
    <location>
        <position position="498"/>
    </location>
    <ligand>
        <name>L-aspartate</name>
        <dbReference type="ChEBI" id="CHEBI:29991"/>
    </ligand>
</feature>
<feature type="binding site" evidence="1">
    <location>
        <begin position="543"/>
        <end position="546"/>
    </location>
    <ligand>
        <name>ATP</name>
        <dbReference type="ChEBI" id="CHEBI:30616"/>
    </ligand>
</feature>
<feature type="site" description="Important for tRNA non-discrimination" evidence="1">
    <location>
        <position position="39"/>
    </location>
</feature>
<feature type="site" description="Important for tRNA non-discrimination" evidence="1">
    <location>
        <position position="91"/>
    </location>
</feature>
<proteinExistence type="inferred from homology"/>
<reference key="1">
    <citation type="submission" date="2007-03" db="EMBL/GenBank/DDBJ databases">
        <title>Complete sequence of Desulfotomaculum reducens MI-1.</title>
        <authorList>
            <consortium name="US DOE Joint Genome Institute"/>
            <person name="Copeland A."/>
            <person name="Lucas S."/>
            <person name="Lapidus A."/>
            <person name="Barry K."/>
            <person name="Detter J.C."/>
            <person name="Glavina del Rio T."/>
            <person name="Hammon N."/>
            <person name="Israni S."/>
            <person name="Dalin E."/>
            <person name="Tice H."/>
            <person name="Pitluck S."/>
            <person name="Sims D."/>
            <person name="Brettin T."/>
            <person name="Bruce D."/>
            <person name="Han C."/>
            <person name="Tapia R."/>
            <person name="Schmutz J."/>
            <person name="Larimer F."/>
            <person name="Land M."/>
            <person name="Hauser L."/>
            <person name="Kyrpides N."/>
            <person name="Kim E."/>
            <person name="Tebo B.M."/>
            <person name="Richardson P."/>
        </authorList>
    </citation>
    <scope>NUCLEOTIDE SEQUENCE [LARGE SCALE GENOMIC DNA]</scope>
    <source>
        <strain>ATCC BAA-1160 / DSM 100696 / MI-1</strain>
    </source>
</reference>
<name>SYDND_DESRM</name>